<feature type="chain" id="PRO_0000360853" description="Zinc-transporting ATPase">
    <location>
        <begin position="1"/>
        <end position="637"/>
    </location>
</feature>
<feature type="transmembrane region" description="Helical" evidence="2">
    <location>
        <begin position="43"/>
        <end position="63"/>
    </location>
</feature>
<feature type="transmembrane region" description="Helical" evidence="2">
    <location>
        <begin position="89"/>
        <end position="109"/>
    </location>
</feature>
<feature type="transmembrane region" description="Helical" evidence="2">
    <location>
        <begin position="258"/>
        <end position="278"/>
    </location>
</feature>
<feature type="transmembrane region" description="Helical" evidence="2">
    <location>
        <begin position="286"/>
        <end position="306"/>
    </location>
</feature>
<feature type="transmembrane region" description="Helical" evidence="2">
    <location>
        <begin position="599"/>
        <end position="619"/>
    </location>
</feature>
<feature type="active site" description="4-aspartylphosphate intermediate" evidence="1">
    <location>
        <position position="337"/>
    </location>
</feature>
<feature type="binding site" evidence="1">
    <location>
        <position position="535"/>
    </location>
    <ligand>
        <name>Mg(2+)</name>
        <dbReference type="ChEBI" id="CHEBI:18420"/>
    </ligand>
</feature>
<feature type="binding site" evidence="1">
    <location>
        <position position="539"/>
    </location>
    <ligand>
        <name>Mg(2+)</name>
        <dbReference type="ChEBI" id="CHEBI:18420"/>
    </ligand>
</feature>
<sequence>MNEQVIVQRDPHEPLKTDKREKNWAQHAELIAALVSGALILAGWLLSGYQVLSIILFLLAFVIGGFAKAKEGIEETLESKTLNVELLMIFAAIGSALIGYWAEGAILIFIFSLSGALETYTMNKSSRDLTSLMQLEPEEATLMVNGETKRVPVSDLQAGDMIVIKPGERVAADGIIESGSTSLDESALTGESMPVEKNTGDTVFTGTVNRNGSLTVRVTKANEDSLFRKIIKLVESAQNSVSPAQAFIERFENAYVKGVLIAVALLLFVPHFALGWSWSETFYRAMVFMVVASPCALVASIMPAALSLISNGARNGMLVKGSVFLEQLGSVQMIAFDKTGTVTKGQPAVETIRIAEGFSEAEVLEAVYAIETQSSHPLAQAITAYAESRGVNQSGYISIEETSGFGVMAEVSGAKWKVGKAGFIGEEMAAQFMKQTASDVIQSGHTIVFVKKDDQIAGCIALKDQIRPEAKEVMEELNRLGIKTAMLTGDHEDTAQAIAKEAGMTTVVAECLPDQKVNEIKRLKEEFGTIAMVGDGINDAPALKAADVGIAMGGGTDVALETADMVLMKNDLKKLVNMCRLSRKMNRIIKQNIVFSLAVICLLICANFLQAMELPFGVIGHEGSTILVILNGLRLLK</sequence>
<name>ZOSA_BACSU</name>
<gene>
    <name type="primary">zosA</name>
    <name type="synonym">ykvW</name>
    <name type="ordered locus">BSU13850</name>
</gene>
<evidence type="ECO:0000250" key="1"/>
<evidence type="ECO:0000255" key="2"/>
<evidence type="ECO:0000269" key="3">
    <source>
    </source>
</evidence>
<evidence type="ECO:0000269" key="4">
    <source>
    </source>
</evidence>
<evidence type="ECO:0000305" key="5"/>
<proteinExistence type="evidence at protein level"/>
<protein>
    <recommendedName>
        <fullName>Zinc-transporting ATPase</fullName>
        <ecNumber evidence="3">7.2.2.20</ecNumber>
    </recommendedName>
    <alternativeName>
        <fullName evidence="5">ABC-type Zn(2+) transporter</fullName>
    </alternativeName>
    <alternativeName>
        <fullName>Zn(2+)-translocating P-type ATPase</fullName>
    </alternativeName>
</protein>
<dbReference type="EC" id="7.2.2.20" evidence="3"/>
<dbReference type="EMBL" id="AL009126">
    <property type="protein sequence ID" value="CAB13258.1"/>
    <property type="molecule type" value="Genomic_DNA"/>
</dbReference>
<dbReference type="PIR" id="F69869">
    <property type="entry name" value="F69869"/>
</dbReference>
<dbReference type="SMR" id="O31688"/>
<dbReference type="FunCoup" id="O31688">
    <property type="interactions" value="97"/>
</dbReference>
<dbReference type="STRING" id="224308.BSU13850"/>
<dbReference type="TCDB" id="3.A.3.6.9">
    <property type="family name" value="the p-type atpase (p-atpase) superfamily"/>
</dbReference>
<dbReference type="PaxDb" id="224308-BSU13850"/>
<dbReference type="EnsemblBacteria" id="CAB13258">
    <property type="protein sequence ID" value="CAB13258"/>
    <property type="gene ID" value="BSU_13850"/>
</dbReference>
<dbReference type="GeneID" id="939268"/>
<dbReference type="KEGG" id="bsu:BSU13850"/>
<dbReference type="PATRIC" id="fig|224308.179.peg.1509"/>
<dbReference type="eggNOG" id="COG2217">
    <property type="taxonomic scope" value="Bacteria"/>
</dbReference>
<dbReference type="InParanoid" id="O31688"/>
<dbReference type="OrthoDB" id="9813266at2"/>
<dbReference type="PhylomeDB" id="O31688"/>
<dbReference type="BioCyc" id="BSUB:BSU13850-MONOMER"/>
<dbReference type="Proteomes" id="UP000001570">
    <property type="component" value="Chromosome"/>
</dbReference>
<dbReference type="GO" id="GO:0005886">
    <property type="term" value="C:plasma membrane"/>
    <property type="evidence" value="ECO:0007669"/>
    <property type="project" value="UniProtKB-SubCell"/>
</dbReference>
<dbReference type="GO" id="GO:0015633">
    <property type="term" value="F:ABC-type zinc transporter activity"/>
    <property type="evidence" value="ECO:0007669"/>
    <property type="project" value="RHEA"/>
</dbReference>
<dbReference type="GO" id="GO:0005524">
    <property type="term" value="F:ATP binding"/>
    <property type="evidence" value="ECO:0007669"/>
    <property type="project" value="UniProtKB-KW"/>
</dbReference>
<dbReference type="GO" id="GO:0016887">
    <property type="term" value="F:ATP hydrolysis activity"/>
    <property type="evidence" value="ECO:0007669"/>
    <property type="project" value="InterPro"/>
</dbReference>
<dbReference type="GO" id="GO:0046872">
    <property type="term" value="F:metal ion binding"/>
    <property type="evidence" value="ECO:0007669"/>
    <property type="project" value="UniProtKB-KW"/>
</dbReference>
<dbReference type="CDD" id="cd07551">
    <property type="entry name" value="P-type_ATPase_HM_ZosA_PfeT-like"/>
    <property type="match status" value="1"/>
</dbReference>
<dbReference type="FunFam" id="2.70.150.10:FF:000002">
    <property type="entry name" value="Copper-transporting ATPase 1, putative"/>
    <property type="match status" value="1"/>
</dbReference>
<dbReference type="FunFam" id="3.40.50.1000:FF:000020">
    <property type="entry name" value="Probable cation-transporting P-type ATPase"/>
    <property type="match status" value="1"/>
</dbReference>
<dbReference type="Gene3D" id="3.40.1110.10">
    <property type="entry name" value="Calcium-transporting ATPase, cytoplasmic domain N"/>
    <property type="match status" value="1"/>
</dbReference>
<dbReference type="Gene3D" id="2.70.150.10">
    <property type="entry name" value="Calcium-transporting ATPase, cytoplasmic transduction domain A"/>
    <property type="match status" value="1"/>
</dbReference>
<dbReference type="Gene3D" id="3.40.50.1000">
    <property type="entry name" value="HAD superfamily/HAD-like"/>
    <property type="match status" value="1"/>
</dbReference>
<dbReference type="InterPro" id="IPR023299">
    <property type="entry name" value="ATPase_P-typ_cyto_dom_N"/>
</dbReference>
<dbReference type="InterPro" id="IPR018303">
    <property type="entry name" value="ATPase_P-typ_P_site"/>
</dbReference>
<dbReference type="InterPro" id="IPR023298">
    <property type="entry name" value="ATPase_P-typ_TM_dom_sf"/>
</dbReference>
<dbReference type="InterPro" id="IPR008250">
    <property type="entry name" value="ATPase_P-typ_transduc_dom_A_sf"/>
</dbReference>
<dbReference type="InterPro" id="IPR051949">
    <property type="entry name" value="Cation_Transport_ATPase"/>
</dbReference>
<dbReference type="InterPro" id="IPR036412">
    <property type="entry name" value="HAD-like_sf"/>
</dbReference>
<dbReference type="InterPro" id="IPR023214">
    <property type="entry name" value="HAD_sf"/>
</dbReference>
<dbReference type="InterPro" id="IPR027256">
    <property type="entry name" value="P-typ_ATPase_IB"/>
</dbReference>
<dbReference type="InterPro" id="IPR001757">
    <property type="entry name" value="P_typ_ATPase"/>
</dbReference>
<dbReference type="InterPro" id="IPR044492">
    <property type="entry name" value="P_typ_ATPase_HD_dom"/>
</dbReference>
<dbReference type="NCBIfam" id="TIGR01511">
    <property type="entry name" value="ATPase-IB1_Cu"/>
    <property type="match status" value="1"/>
</dbReference>
<dbReference type="NCBIfam" id="TIGR01512">
    <property type="entry name" value="ATPase-IB2_Cd"/>
    <property type="match status" value="1"/>
</dbReference>
<dbReference type="NCBIfam" id="TIGR01525">
    <property type="entry name" value="ATPase-IB_hvy"/>
    <property type="match status" value="1"/>
</dbReference>
<dbReference type="NCBIfam" id="TIGR01494">
    <property type="entry name" value="ATPase_P-type"/>
    <property type="match status" value="1"/>
</dbReference>
<dbReference type="PANTHER" id="PTHR43079:SF1">
    <property type="entry name" value="CADMIUM_ZINC-TRANSPORTING ATPASE HMA1, CHLOROPLASTIC-RELATED"/>
    <property type="match status" value="1"/>
</dbReference>
<dbReference type="PANTHER" id="PTHR43079">
    <property type="entry name" value="PROBABLE CADMIUM/ZINC-TRANSPORTING ATPASE HMA1"/>
    <property type="match status" value="1"/>
</dbReference>
<dbReference type="Pfam" id="PF00122">
    <property type="entry name" value="E1-E2_ATPase"/>
    <property type="match status" value="1"/>
</dbReference>
<dbReference type="Pfam" id="PF00702">
    <property type="entry name" value="Hydrolase"/>
    <property type="match status" value="1"/>
</dbReference>
<dbReference type="PRINTS" id="PR00119">
    <property type="entry name" value="CATATPASE"/>
</dbReference>
<dbReference type="PRINTS" id="PR00941">
    <property type="entry name" value="CDATPASE"/>
</dbReference>
<dbReference type="SFLD" id="SFLDG00002">
    <property type="entry name" value="C1.7:_P-type_atpase_like"/>
    <property type="match status" value="1"/>
</dbReference>
<dbReference type="SFLD" id="SFLDF00027">
    <property type="entry name" value="p-type_atpase"/>
    <property type="match status" value="1"/>
</dbReference>
<dbReference type="SUPFAM" id="SSF81653">
    <property type="entry name" value="Calcium ATPase, transduction domain A"/>
    <property type="match status" value="1"/>
</dbReference>
<dbReference type="SUPFAM" id="SSF81665">
    <property type="entry name" value="Calcium ATPase, transmembrane domain M"/>
    <property type="match status" value="1"/>
</dbReference>
<dbReference type="SUPFAM" id="SSF56784">
    <property type="entry name" value="HAD-like"/>
    <property type="match status" value="1"/>
</dbReference>
<dbReference type="PROSITE" id="PS00154">
    <property type="entry name" value="ATPASE_E1_E2"/>
    <property type="match status" value="1"/>
</dbReference>
<accession>O31688</accession>
<keyword id="KW-0067">ATP-binding</keyword>
<keyword id="KW-1003">Cell membrane</keyword>
<keyword id="KW-0406">Ion transport</keyword>
<keyword id="KW-0460">Magnesium</keyword>
<keyword id="KW-0472">Membrane</keyword>
<keyword id="KW-0479">Metal-binding</keyword>
<keyword id="KW-0547">Nucleotide-binding</keyword>
<keyword id="KW-0597">Phosphoprotein</keyword>
<keyword id="KW-1185">Reference proteome</keyword>
<keyword id="KW-1278">Translocase</keyword>
<keyword id="KW-0812">Transmembrane</keyword>
<keyword id="KW-1133">Transmembrane helix</keyword>
<keyword id="KW-0813">Transport</keyword>
<keyword id="KW-0862">Zinc</keyword>
<keyword id="KW-0864">Zinc transport</keyword>
<comment type="function">
    <text evidence="3 4">Couples the hydrolysis of ATP with the transport of zinc into the cell. Plays an important role in protecting cells against oxidative stress. ZosA-mediated zinc transport is required for post-transcriptional control of comK and competence development.</text>
</comment>
<comment type="catalytic activity">
    <reaction evidence="3">
        <text>Zn(2+)(out) + ATP(in) + H2O(in) = Zn(2+)(in) + ADP(in) + phosphate(in) + H(+)(in)</text>
        <dbReference type="Rhea" id="RHEA:29795"/>
        <dbReference type="ChEBI" id="CHEBI:15377"/>
        <dbReference type="ChEBI" id="CHEBI:15378"/>
        <dbReference type="ChEBI" id="CHEBI:29105"/>
        <dbReference type="ChEBI" id="CHEBI:30616"/>
        <dbReference type="ChEBI" id="CHEBI:43474"/>
        <dbReference type="ChEBI" id="CHEBI:456216"/>
        <dbReference type="EC" id="7.2.2.20"/>
    </reaction>
    <physiologicalReaction direction="left-to-right" evidence="3">
        <dbReference type="Rhea" id="RHEA:29796"/>
    </physiologicalReaction>
</comment>
<comment type="subcellular location">
    <subcellularLocation>
        <location evidence="5">Cell membrane</location>
        <topology evidence="5">Multi-pass membrane protein</topology>
    </subcellularLocation>
</comment>
<comment type="induction">
    <text evidence="3">By hydrogen peroxide. Repressed by PerR.</text>
</comment>
<comment type="disruption phenotype">
    <text evidence="4">Disruption results in low transformability, which can be rescued by the addition of excess zinc.</text>
</comment>
<comment type="similarity">
    <text evidence="5">Belongs to the cation transport ATPase (P-type) (TC 3.A.3) family. Type IB subfamily.</text>
</comment>
<reference key="1">
    <citation type="journal article" date="1997" name="Nature">
        <title>The complete genome sequence of the Gram-positive bacterium Bacillus subtilis.</title>
        <authorList>
            <person name="Kunst F."/>
            <person name="Ogasawara N."/>
            <person name="Moszer I."/>
            <person name="Albertini A.M."/>
            <person name="Alloni G."/>
            <person name="Azevedo V."/>
            <person name="Bertero M.G."/>
            <person name="Bessieres P."/>
            <person name="Bolotin A."/>
            <person name="Borchert S."/>
            <person name="Borriss R."/>
            <person name="Boursier L."/>
            <person name="Brans A."/>
            <person name="Braun M."/>
            <person name="Brignell S.C."/>
            <person name="Bron S."/>
            <person name="Brouillet S."/>
            <person name="Bruschi C.V."/>
            <person name="Caldwell B."/>
            <person name="Capuano V."/>
            <person name="Carter N.M."/>
            <person name="Choi S.-K."/>
            <person name="Codani J.-J."/>
            <person name="Connerton I.F."/>
            <person name="Cummings N.J."/>
            <person name="Daniel R.A."/>
            <person name="Denizot F."/>
            <person name="Devine K.M."/>
            <person name="Duesterhoeft A."/>
            <person name="Ehrlich S.D."/>
            <person name="Emmerson P.T."/>
            <person name="Entian K.-D."/>
            <person name="Errington J."/>
            <person name="Fabret C."/>
            <person name="Ferrari E."/>
            <person name="Foulger D."/>
            <person name="Fritz C."/>
            <person name="Fujita M."/>
            <person name="Fujita Y."/>
            <person name="Fuma S."/>
            <person name="Galizzi A."/>
            <person name="Galleron N."/>
            <person name="Ghim S.-Y."/>
            <person name="Glaser P."/>
            <person name="Goffeau A."/>
            <person name="Golightly E.J."/>
            <person name="Grandi G."/>
            <person name="Guiseppi G."/>
            <person name="Guy B.J."/>
            <person name="Haga K."/>
            <person name="Haiech J."/>
            <person name="Harwood C.R."/>
            <person name="Henaut A."/>
            <person name="Hilbert H."/>
            <person name="Holsappel S."/>
            <person name="Hosono S."/>
            <person name="Hullo M.-F."/>
            <person name="Itaya M."/>
            <person name="Jones L.-M."/>
            <person name="Joris B."/>
            <person name="Karamata D."/>
            <person name="Kasahara Y."/>
            <person name="Klaerr-Blanchard M."/>
            <person name="Klein C."/>
            <person name="Kobayashi Y."/>
            <person name="Koetter P."/>
            <person name="Koningstein G."/>
            <person name="Krogh S."/>
            <person name="Kumano M."/>
            <person name="Kurita K."/>
            <person name="Lapidus A."/>
            <person name="Lardinois S."/>
            <person name="Lauber J."/>
            <person name="Lazarevic V."/>
            <person name="Lee S.-M."/>
            <person name="Levine A."/>
            <person name="Liu H."/>
            <person name="Masuda S."/>
            <person name="Mauel C."/>
            <person name="Medigue C."/>
            <person name="Medina N."/>
            <person name="Mellado R.P."/>
            <person name="Mizuno M."/>
            <person name="Moestl D."/>
            <person name="Nakai S."/>
            <person name="Noback M."/>
            <person name="Noone D."/>
            <person name="O'Reilly M."/>
            <person name="Ogawa K."/>
            <person name="Ogiwara A."/>
            <person name="Oudega B."/>
            <person name="Park S.-H."/>
            <person name="Parro V."/>
            <person name="Pohl T.M."/>
            <person name="Portetelle D."/>
            <person name="Porwollik S."/>
            <person name="Prescott A.M."/>
            <person name="Presecan E."/>
            <person name="Pujic P."/>
            <person name="Purnelle B."/>
            <person name="Rapoport G."/>
            <person name="Rey M."/>
            <person name="Reynolds S."/>
            <person name="Rieger M."/>
            <person name="Rivolta C."/>
            <person name="Rocha E."/>
            <person name="Roche B."/>
            <person name="Rose M."/>
            <person name="Sadaie Y."/>
            <person name="Sato T."/>
            <person name="Scanlan E."/>
            <person name="Schleich S."/>
            <person name="Schroeter R."/>
            <person name="Scoffone F."/>
            <person name="Sekiguchi J."/>
            <person name="Sekowska A."/>
            <person name="Seror S.J."/>
            <person name="Serror P."/>
            <person name="Shin B.-S."/>
            <person name="Soldo B."/>
            <person name="Sorokin A."/>
            <person name="Tacconi E."/>
            <person name="Takagi T."/>
            <person name="Takahashi H."/>
            <person name="Takemaru K."/>
            <person name="Takeuchi M."/>
            <person name="Tamakoshi A."/>
            <person name="Tanaka T."/>
            <person name="Terpstra P."/>
            <person name="Tognoni A."/>
            <person name="Tosato V."/>
            <person name="Uchiyama S."/>
            <person name="Vandenbol M."/>
            <person name="Vannier F."/>
            <person name="Vassarotti A."/>
            <person name="Viari A."/>
            <person name="Wambutt R."/>
            <person name="Wedler E."/>
            <person name="Wedler H."/>
            <person name="Weitzenegger T."/>
            <person name="Winters P."/>
            <person name="Wipat A."/>
            <person name="Yamamoto H."/>
            <person name="Yamane K."/>
            <person name="Yasumoto K."/>
            <person name="Yata K."/>
            <person name="Yoshida K."/>
            <person name="Yoshikawa H.-F."/>
            <person name="Zumstein E."/>
            <person name="Yoshikawa H."/>
            <person name="Danchin A."/>
        </authorList>
    </citation>
    <scope>NUCLEOTIDE SEQUENCE [LARGE SCALE GENOMIC DNA]</scope>
    <source>
        <strain>168</strain>
    </source>
</reference>
<reference key="2">
    <citation type="journal article" date="2002" name="Mol. Microbiol.">
        <title>A peroxide-induced zinc uptake system plays an important role in protection against oxidative stress in Bacillus subtilis.</title>
        <authorList>
            <person name="Gaballa A."/>
            <person name="Helmann J.D."/>
        </authorList>
    </citation>
    <scope>FUNCTION</scope>
    <scope>CATALYTIC ACTIVITY</scope>
    <scope>INDUCTION</scope>
    <scope>GENE NAME</scope>
    <source>
        <strain>168 / CU1065</strain>
    </source>
</reference>
<reference key="3">
    <citation type="journal article" date="2011" name="J. Biochem.">
        <title>ZnuABC and ZosA zinc transporters are differently involved in competence development in Bacillus subtilis.</title>
        <authorList>
            <person name="Ogura M."/>
        </authorList>
    </citation>
    <scope>DISRUPTION PHENOTYPE</scope>
    <scope>FUNCTION IN COMPETENCE DEVELOPMENT</scope>
    <source>
        <strain>168</strain>
    </source>
</reference>
<organism>
    <name type="scientific">Bacillus subtilis (strain 168)</name>
    <dbReference type="NCBI Taxonomy" id="224308"/>
    <lineage>
        <taxon>Bacteria</taxon>
        <taxon>Bacillati</taxon>
        <taxon>Bacillota</taxon>
        <taxon>Bacilli</taxon>
        <taxon>Bacillales</taxon>
        <taxon>Bacillaceae</taxon>
        <taxon>Bacillus</taxon>
    </lineage>
</organism>